<accession>Q7VQH1</accession>
<dbReference type="EC" id="1.8.1.2" evidence="1"/>
<dbReference type="EMBL" id="BX248583">
    <property type="protein sequence ID" value="CAD83680.1"/>
    <property type="molecule type" value="Genomic_DNA"/>
</dbReference>
<dbReference type="SMR" id="Q7VQH1"/>
<dbReference type="STRING" id="203907.Bfl159"/>
<dbReference type="KEGG" id="bfl:Bfl159"/>
<dbReference type="eggNOG" id="COG0155">
    <property type="taxonomic scope" value="Bacteria"/>
</dbReference>
<dbReference type="HOGENOM" id="CLU_001975_3_2_6"/>
<dbReference type="UniPathway" id="UPA00140">
    <property type="reaction ID" value="UER00207"/>
</dbReference>
<dbReference type="Proteomes" id="UP000002192">
    <property type="component" value="Chromosome"/>
</dbReference>
<dbReference type="GO" id="GO:0009337">
    <property type="term" value="C:sulfite reductase complex (NADPH)"/>
    <property type="evidence" value="ECO:0007669"/>
    <property type="project" value="InterPro"/>
</dbReference>
<dbReference type="GO" id="GO:0051539">
    <property type="term" value="F:4 iron, 4 sulfur cluster binding"/>
    <property type="evidence" value="ECO:0007669"/>
    <property type="project" value="UniProtKB-KW"/>
</dbReference>
<dbReference type="GO" id="GO:0020037">
    <property type="term" value="F:heme binding"/>
    <property type="evidence" value="ECO:0007669"/>
    <property type="project" value="InterPro"/>
</dbReference>
<dbReference type="GO" id="GO:0046872">
    <property type="term" value="F:metal ion binding"/>
    <property type="evidence" value="ECO:0007669"/>
    <property type="project" value="UniProtKB-KW"/>
</dbReference>
<dbReference type="GO" id="GO:0050661">
    <property type="term" value="F:NADP binding"/>
    <property type="evidence" value="ECO:0007669"/>
    <property type="project" value="InterPro"/>
</dbReference>
<dbReference type="GO" id="GO:0050311">
    <property type="term" value="F:sulfite reductase (ferredoxin) activity"/>
    <property type="evidence" value="ECO:0007669"/>
    <property type="project" value="TreeGrafter"/>
</dbReference>
<dbReference type="GO" id="GO:0004783">
    <property type="term" value="F:sulfite reductase (NADPH) activity"/>
    <property type="evidence" value="ECO:0007669"/>
    <property type="project" value="UniProtKB-UniRule"/>
</dbReference>
<dbReference type="GO" id="GO:0019344">
    <property type="term" value="P:cysteine biosynthetic process"/>
    <property type="evidence" value="ECO:0007669"/>
    <property type="project" value="UniProtKB-KW"/>
</dbReference>
<dbReference type="GO" id="GO:0070814">
    <property type="term" value="P:hydrogen sulfide biosynthetic process"/>
    <property type="evidence" value="ECO:0007669"/>
    <property type="project" value="UniProtKB-UniRule"/>
</dbReference>
<dbReference type="GO" id="GO:0000103">
    <property type="term" value="P:sulfate assimilation"/>
    <property type="evidence" value="ECO:0007669"/>
    <property type="project" value="UniProtKB-UniRule"/>
</dbReference>
<dbReference type="FunFam" id="3.30.413.10:FF:000003">
    <property type="entry name" value="Sulfite reductase [NADPH] hemoprotein beta-component"/>
    <property type="match status" value="1"/>
</dbReference>
<dbReference type="Gene3D" id="3.90.480.20">
    <property type="match status" value="1"/>
</dbReference>
<dbReference type="Gene3D" id="3.30.413.10">
    <property type="entry name" value="Sulfite Reductase Hemoprotein, domain 1"/>
    <property type="match status" value="2"/>
</dbReference>
<dbReference type="HAMAP" id="MF_01540">
    <property type="entry name" value="CysI"/>
    <property type="match status" value="1"/>
</dbReference>
<dbReference type="InterPro" id="IPR011786">
    <property type="entry name" value="CysI"/>
</dbReference>
<dbReference type="InterPro" id="IPR005117">
    <property type="entry name" value="NiRdtase/SiRdtase_haem-b_fer"/>
</dbReference>
<dbReference type="InterPro" id="IPR036136">
    <property type="entry name" value="Nit/Sulf_reduc_fer-like_dom_sf"/>
</dbReference>
<dbReference type="InterPro" id="IPR006067">
    <property type="entry name" value="NO2/SO3_Rdtase_4Fe4S_dom"/>
</dbReference>
<dbReference type="InterPro" id="IPR045169">
    <property type="entry name" value="NO2/SO3_Rdtase_4Fe4S_prot"/>
</dbReference>
<dbReference type="InterPro" id="IPR045854">
    <property type="entry name" value="NO2/SO3_Rdtase_4Fe4S_sf"/>
</dbReference>
<dbReference type="InterPro" id="IPR006066">
    <property type="entry name" value="NO2/SO3_Rdtase_FeS/sirohaem_BS"/>
</dbReference>
<dbReference type="NCBIfam" id="TIGR02041">
    <property type="entry name" value="CysI"/>
    <property type="match status" value="1"/>
</dbReference>
<dbReference type="NCBIfam" id="NF010029">
    <property type="entry name" value="PRK13504.1"/>
    <property type="match status" value="1"/>
</dbReference>
<dbReference type="PANTHER" id="PTHR11493:SF47">
    <property type="entry name" value="SULFITE REDUCTASE [NADPH] SUBUNIT BETA"/>
    <property type="match status" value="1"/>
</dbReference>
<dbReference type="PANTHER" id="PTHR11493">
    <property type="entry name" value="SULFITE REDUCTASE [NADPH] SUBUNIT BETA-RELATED"/>
    <property type="match status" value="1"/>
</dbReference>
<dbReference type="Pfam" id="PF01077">
    <property type="entry name" value="NIR_SIR"/>
    <property type="match status" value="1"/>
</dbReference>
<dbReference type="Pfam" id="PF03460">
    <property type="entry name" value="NIR_SIR_ferr"/>
    <property type="match status" value="2"/>
</dbReference>
<dbReference type="PRINTS" id="PR00397">
    <property type="entry name" value="SIROHAEM"/>
</dbReference>
<dbReference type="SUPFAM" id="SSF56014">
    <property type="entry name" value="Nitrite and sulphite reductase 4Fe-4S domain-like"/>
    <property type="match status" value="2"/>
</dbReference>
<dbReference type="SUPFAM" id="SSF55124">
    <property type="entry name" value="Nitrite/Sulfite reductase N-terminal domain-like"/>
    <property type="match status" value="2"/>
</dbReference>
<dbReference type="PROSITE" id="PS00365">
    <property type="entry name" value="NIR_SIR"/>
    <property type="match status" value="1"/>
</dbReference>
<evidence type="ECO:0000255" key="1">
    <source>
        <dbReference type="HAMAP-Rule" id="MF_01540"/>
    </source>
</evidence>
<proteinExistence type="inferred from homology"/>
<name>CYSI_BLOFL</name>
<sequence>MIMLKYNNKLLSDNERIKKNSNFLRGTIEKDLDNNLTGGFNVDNAQLIRFHGMYQQDDRDVRLERMNQKLEPLINMMLRCRLPGGVITSQQWLNIDNFSEEQTLYSSIRLTTRQTFQLHGILKPKLKGIHQLLNKLGLDSIATAGDVNRNVICTANPMESKVHYQIWELSKKISEHLLPKSKAYAEIWLNEKKIESIDSEPILSSVYLPRKFKIAIAVPPVNDVDVYANDLGLVAIKDNTGNLIGFNVLIGGGLAMTYGDKSTYPRMASEFGYINLQDILKIVESVITVQRDWGDRYNRRHAKTKYTLVKVGIDILKKEIENRSGLKFSPMYPYKFTERGDKFGWIRGINQDYWHLTLFIENGRVCNTSNILIKKGLSEIAKVHSGFFRITTNQNLIISEIHQDKKDIIEDLLKQYGLLGDFVTSQRKSSMACVAFPTCPLAMAEAERFLPAFVTKVEHVMSKYNLQRDAIILRVTGCPNGCARAMLAEIGLTGRGIGRYNLYLGGNKNGTRIPRLYKENITEDEILHVLDITIGDWAKNRKTQESYGDYVVRAGIVRAVINSEEDFYL</sequence>
<protein>
    <recommendedName>
        <fullName evidence="1">Sulfite reductase [NADPH] hemoprotein beta-component</fullName>
        <shortName evidence="1">SiR-HP</shortName>
        <shortName evidence="1">SiRHP</shortName>
        <ecNumber evidence="1">1.8.1.2</ecNumber>
    </recommendedName>
</protein>
<keyword id="KW-0004">4Fe-4S</keyword>
<keyword id="KW-0028">Amino-acid biosynthesis</keyword>
<keyword id="KW-0198">Cysteine biosynthesis</keyword>
<keyword id="KW-0349">Heme</keyword>
<keyword id="KW-0408">Iron</keyword>
<keyword id="KW-0411">Iron-sulfur</keyword>
<keyword id="KW-0479">Metal-binding</keyword>
<keyword id="KW-0521">NADP</keyword>
<keyword id="KW-0560">Oxidoreductase</keyword>
<keyword id="KW-1185">Reference proteome</keyword>
<reference key="1">
    <citation type="journal article" date="2003" name="Proc. Natl. Acad. Sci. U.S.A.">
        <title>The genome sequence of Blochmannia floridanus: comparative analysis of reduced genomes.</title>
        <authorList>
            <person name="Gil R."/>
            <person name="Silva F.J."/>
            <person name="Zientz E."/>
            <person name="Delmotte F."/>
            <person name="Gonzalez-Candelas F."/>
            <person name="Latorre A."/>
            <person name="Rausell C."/>
            <person name="Kamerbeek J."/>
            <person name="Gadau J."/>
            <person name="Hoelldobler B."/>
            <person name="van Ham R.C.H.J."/>
            <person name="Gross R."/>
            <person name="Moya A."/>
        </authorList>
    </citation>
    <scope>NUCLEOTIDE SEQUENCE [LARGE SCALE GENOMIC DNA]</scope>
</reference>
<feature type="chain" id="PRO_0000199895" description="Sulfite reductase [NADPH] hemoprotein beta-component">
    <location>
        <begin position="1"/>
        <end position="569"/>
    </location>
</feature>
<feature type="binding site" evidence="1">
    <location>
        <position position="433"/>
    </location>
    <ligand>
        <name>[4Fe-4S] cluster</name>
        <dbReference type="ChEBI" id="CHEBI:49883"/>
    </ligand>
</feature>
<feature type="binding site" evidence="1">
    <location>
        <position position="439"/>
    </location>
    <ligand>
        <name>[4Fe-4S] cluster</name>
        <dbReference type="ChEBI" id="CHEBI:49883"/>
    </ligand>
</feature>
<feature type="binding site" evidence="1">
    <location>
        <position position="478"/>
    </location>
    <ligand>
        <name>[4Fe-4S] cluster</name>
        <dbReference type="ChEBI" id="CHEBI:49883"/>
    </ligand>
</feature>
<feature type="binding site" evidence="1">
    <location>
        <position position="482"/>
    </location>
    <ligand>
        <name>[4Fe-4S] cluster</name>
        <dbReference type="ChEBI" id="CHEBI:49883"/>
    </ligand>
</feature>
<feature type="binding site" description="axial binding residue" evidence="1">
    <location>
        <position position="482"/>
    </location>
    <ligand>
        <name>siroheme</name>
        <dbReference type="ChEBI" id="CHEBI:60052"/>
    </ligand>
    <ligandPart>
        <name>Fe</name>
        <dbReference type="ChEBI" id="CHEBI:18248"/>
    </ligandPart>
</feature>
<comment type="function">
    <text evidence="1">Component of the sulfite reductase complex that catalyzes the 6-electron reduction of sulfite to sulfide. This is one of several activities required for the biosynthesis of L-cysteine from sulfate.</text>
</comment>
<comment type="catalytic activity">
    <reaction evidence="1">
        <text>hydrogen sulfide + 3 NADP(+) + 3 H2O = sulfite + 3 NADPH + 4 H(+)</text>
        <dbReference type="Rhea" id="RHEA:13801"/>
        <dbReference type="ChEBI" id="CHEBI:15377"/>
        <dbReference type="ChEBI" id="CHEBI:15378"/>
        <dbReference type="ChEBI" id="CHEBI:17359"/>
        <dbReference type="ChEBI" id="CHEBI:29919"/>
        <dbReference type="ChEBI" id="CHEBI:57783"/>
        <dbReference type="ChEBI" id="CHEBI:58349"/>
        <dbReference type="EC" id="1.8.1.2"/>
    </reaction>
</comment>
<comment type="cofactor">
    <cofactor evidence="1">
        <name>siroheme</name>
        <dbReference type="ChEBI" id="CHEBI:60052"/>
    </cofactor>
    <text evidence="1">Binds 1 siroheme per subunit.</text>
</comment>
<comment type="cofactor">
    <cofactor evidence="1">
        <name>[4Fe-4S] cluster</name>
        <dbReference type="ChEBI" id="CHEBI:49883"/>
    </cofactor>
    <text evidence="1">Binds 1 [4Fe-4S] cluster per subunit.</text>
</comment>
<comment type="pathway">
    <text evidence="1">Sulfur metabolism; hydrogen sulfide biosynthesis; hydrogen sulfide from sulfite (NADPH route): step 1/1.</text>
</comment>
<comment type="subunit">
    <text evidence="1">Alpha(8)-beta(8). The alpha component is a flavoprotein, the beta component is a hemoprotein.</text>
</comment>
<comment type="similarity">
    <text evidence="1">Belongs to the nitrite and sulfite reductase 4Fe-4S domain family.</text>
</comment>
<organism>
    <name type="scientific">Blochmanniella floridana</name>
    <dbReference type="NCBI Taxonomy" id="203907"/>
    <lineage>
        <taxon>Bacteria</taxon>
        <taxon>Pseudomonadati</taxon>
        <taxon>Pseudomonadota</taxon>
        <taxon>Gammaproteobacteria</taxon>
        <taxon>Enterobacterales</taxon>
        <taxon>Enterobacteriaceae</taxon>
        <taxon>ant endosymbionts</taxon>
        <taxon>Candidatus Blochmanniella</taxon>
    </lineage>
</organism>
<gene>
    <name evidence="1" type="primary">cysI</name>
    <name type="ordered locus">Bfl159</name>
</gene>